<proteinExistence type="inferred from homology"/>
<comment type="function">
    <text evidence="1">Component of the anaphase promoting complex/cyclosome (APC/C), a cell cycle-regulated E3 ubiquitin ligase that controls progression through mitosis and the G1 phase of the cell cycle. The APC/C complex catalyzes assembly of branched 'Lys-11'-/'Lys-48'-linked branched ubiquitin chains on target proteins. In the complex, plays a role in the release of the mitotic checkpoint complex (MCC) from the APC/C: not required for APC/C activity itself, but promotes the turnover of CDC20 and MCC on the APC/C, thereby participating in the responsiveness of the spindle assembly checkpoint. Also required for degradation of CDC20.</text>
</comment>
<comment type="pathway">
    <text evidence="1">Protein modification; protein ubiquitination.</text>
</comment>
<comment type="subunit">
    <text evidence="1">The mammalian APC/C is composed at least of 14 distinct subunits ANAPC1, ANAPC2, CDC27/APC3, ANAPC4, ANAPC5, CDC16/APC6, ANAPC7, CDC23/APC8, ANAPC10, ANAPC11, CDC26/APC12, ANAPC13, ANAPC15 and ANAPC16 that assemble into a complex of at least 19 chains with a combined molecular mass of around 1.2 MDa; APC/C interacts with FZR1 and FBXO5.</text>
</comment>
<comment type="alternative products">
    <event type="alternative splicing"/>
    <isoform>
        <id>D3ZQX4-1</id>
        <name>1</name>
        <sequence type="displayed"/>
    </isoform>
    <isoform>
        <id>D3ZQX4-2</id>
        <name>2</name>
        <sequence type="described" ref="VSP_043774"/>
    </isoform>
</comment>
<comment type="similarity">
    <text evidence="3">Belongs to the APC15 family.</text>
</comment>
<name>APC15_RAT</name>
<accession>D3ZQX4</accession>
<accession>D4ACX3</accession>
<reference key="1">
    <citation type="journal article" date="2004" name="Nature">
        <title>Genome sequence of the Brown Norway rat yields insights into mammalian evolution.</title>
        <authorList>
            <person name="Gibbs R.A."/>
            <person name="Weinstock G.M."/>
            <person name="Metzker M.L."/>
            <person name="Muzny D.M."/>
            <person name="Sodergren E.J."/>
            <person name="Scherer S."/>
            <person name="Scott G."/>
            <person name="Steffen D."/>
            <person name="Worley K.C."/>
            <person name="Burch P.E."/>
            <person name="Okwuonu G."/>
            <person name="Hines S."/>
            <person name="Lewis L."/>
            <person name="Deramo C."/>
            <person name="Delgado O."/>
            <person name="Dugan-Rocha S."/>
            <person name="Miner G."/>
            <person name="Morgan M."/>
            <person name="Hawes A."/>
            <person name="Gill R."/>
            <person name="Holt R.A."/>
            <person name="Adams M.D."/>
            <person name="Amanatides P.G."/>
            <person name="Baden-Tillson H."/>
            <person name="Barnstead M."/>
            <person name="Chin S."/>
            <person name="Evans C.A."/>
            <person name="Ferriera S."/>
            <person name="Fosler C."/>
            <person name="Glodek A."/>
            <person name="Gu Z."/>
            <person name="Jennings D."/>
            <person name="Kraft C.L."/>
            <person name="Nguyen T."/>
            <person name="Pfannkoch C.M."/>
            <person name="Sitter C."/>
            <person name="Sutton G.G."/>
            <person name="Venter J.C."/>
            <person name="Woodage T."/>
            <person name="Smith D."/>
            <person name="Lee H.-M."/>
            <person name="Gustafson E."/>
            <person name="Cahill P."/>
            <person name="Kana A."/>
            <person name="Doucette-Stamm L."/>
            <person name="Weinstock K."/>
            <person name="Fechtel K."/>
            <person name="Weiss R.B."/>
            <person name="Dunn D.M."/>
            <person name="Green E.D."/>
            <person name="Blakesley R.W."/>
            <person name="Bouffard G.G."/>
            <person name="De Jong P.J."/>
            <person name="Osoegawa K."/>
            <person name="Zhu B."/>
            <person name="Marra M."/>
            <person name="Schein J."/>
            <person name="Bosdet I."/>
            <person name="Fjell C."/>
            <person name="Jones S."/>
            <person name="Krzywinski M."/>
            <person name="Mathewson C."/>
            <person name="Siddiqui A."/>
            <person name="Wye N."/>
            <person name="McPherson J."/>
            <person name="Zhao S."/>
            <person name="Fraser C.M."/>
            <person name="Shetty J."/>
            <person name="Shatsman S."/>
            <person name="Geer K."/>
            <person name="Chen Y."/>
            <person name="Abramzon S."/>
            <person name="Nierman W.C."/>
            <person name="Havlak P.H."/>
            <person name="Chen R."/>
            <person name="Durbin K.J."/>
            <person name="Egan A."/>
            <person name="Ren Y."/>
            <person name="Song X.-Z."/>
            <person name="Li B."/>
            <person name="Liu Y."/>
            <person name="Qin X."/>
            <person name="Cawley S."/>
            <person name="Cooney A.J."/>
            <person name="D'Souza L.M."/>
            <person name="Martin K."/>
            <person name="Wu J.Q."/>
            <person name="Gonzalez-Garay M.L."/>
            <person name="Jackson A.R."/>
            <person name="Kalafus K.J."/>
            <person name="McLeod M.P."/>
            <person name="Milosavljevic A."/>
            <person name="Virk D."/>
            <person name="Volkov A."/>
            <person name="Wheeler D.A."/>
            <person name="Zhang Z."/>
            <person name="Bailey J.A."/>
            <person name="Eichler E.E."/>
            <person name="Tuzun E."/>
            <person name="Birney E."/>
            <person name="Mongin E."/>
            <person name="Ureta-Vidal A."/>
            <person name="Woodwark C."/>
            <person name="Zdobnov E."/>
            <person name="Bork P."/>
            <person name="Suyama M."/>
            <person name="Torrents D."/>
            <person name="Alexandersson M."/>
            <person name="Trask B.J."/>
            <person name="Young J.M."/>
            <person name="Huang H."/>
            <person name="Wang H."/>
            <person name="Xing H."/>
            <person name="Daniels S."/>
            <person name="Gietzen D."/>
            <person name="Schmidt J."/>
            <person name="Stevens K."/>
            <person name="Vitt U."/>
            <person name="Wingrove J."/>
            <person name="Camara F."/>
            <person name="Mar Alba M."/>
            <person name="Abril J.F."/>
            <person name="Guigo R."/>
            <person name="Smit A."/>
            <person name="Dubchak I."/>
            <person name="Rubin E.M."/>
            <person name="Couronne O."/>
            <person name="Poliakov A."/>
            <person name="Huebner N."/>
            <person name="Ganten D."/>
            <person name="Goesele C."/>
            <person name="Hummel O."/>
            <person name="Kreitler T."/>
            <person name="Lee Y.-A."/>
            <person name="Monti J."/>
            <person name="Schulz H."/>
            <person name="Zimdahl H."/>
            <person name="Himmelbauer H."/>
            <person name="Lehrach H."/>
            <person name="Jacob H.J."/>
            <person name="Bromberg S."/>
            <person name="Gullings-Handley J."/>
            <person name="Jensen-Seaman M.I."/>
            <person name="Kwitek A.E."/>
            <person name="Lazar J."/>
            <person name="Pasko D."/>
            <person name="Tonellato P.J."/>
            <person name="Twigger S."/>
            <person name="Ponting C.P."/>
            <person name="Duarte J.M."/>
            <person name="Rice S."/>
            <person name="Goodstadt L."/>
            <person name="Beatson S.A."/>
            <person name="Emes R.D."/>
            <person name="Winter E.E."/>
            <person name="Webber C."/>
            <person name="Brandt P."/>
            <person name="Nyakatura G."/>
            <person name="Adetobi M."/>
            <person name="Chiaromonte F."/>
            <person name="Elnitski L."/>
            <person name="Eswara P."/>
            <person name="Hardison R.C."/>
            <person name="Hou M."/>
            <person name="Kolbe D."/>
            <person name="Makova K."/>
            <person name="Miller W."/>
            <person name="Nekrutenko A."/>
            <person name="Riemer C."/>
            <person name="Schwartz S."/>
            <person name="Taylor J."/>
            <person name="Yang S."/>
            <person name="Zhang Y."/>
            <person name="Lindpaintner K."/>
            <person name="Andrews T.D."/>
            <person name="Caccamo M."/>
            <person name="Clamp M."/>
            <person name="Clarke L."/>
            <person name="Curwen V."/>
            <person name="Durbin R.M."/>
            <person name="Eyras E."/>
            <person name="Searle S.M."/>
            <person name="Cooper G.M."/>
            <person name="Batzoglou S."/>
            <person name="Brudno M."/>
            <person name="Sidow A."/>
            <person name="Stone E.A."/>
            <person name="Payseur B.A."/>
            <person name="Bourque G."/>
            <person name="Lopez-Otin C."/>
            <person name="Puente X.S."/>
            <person name="Chakrabarti K."/>
            <person name="Chatterji S."/>
            <person name="Dewey C."/>
            <person name="Pachter L."/>
            <person name="Bray N."/>
            <person name="Yap V.B."/>
            <person name="Caspi A."/>
            <person name="Tesler G."/>
            <person name="Pevzner P.A."/>
            <person name="Haussler D."/>
            <person name="Roskin K.M."/>
            <person name="Baertsch R."/>
            <person name="Clawson H."/>
            <person name="Furey T.S."/>
            <person name="Hinrichs A.S."/>
            <person name="Karolchik D."/>
            <person name="Kent W.J."/>
            <person name="Rosenbloom K.R."/>
            <person name="Trumbower H."/>
            <person name="Weirauch M."/>
            <person name="Cooper D.N."/>
            <person name="Stenson P.D."/>
            <person name="Ma B."/>
            <person name="Brent M."/>
            <person name="Arumugam M."/>
            <person name="Shteynberg D."/>
            <person name="Copley R.R."/>
            <person name="Taylor M.S."/>
            <person name="Riethman H."/>
            <person name="Mudunuri U."/>
            <person name="Peterson J."/>
            <person name="Guyer M."/>
            <person name="Felsenfeld A."/>
            <person name="Old S."/>
            <person name="Mockrin S."/>
            <person name="Collins F.S."/>
        </authorList>
    </citation>
    <scope>NUCLEOTIDE SEQUENCE [LARGE SCALE GENOMIC DNA]</scope>
    <source>
        <strain>Brown Norway</strain>
    </source>
</reference>
<reference key="2">
    <citation type="submission" date="2005-09" db="EMBL/GenBank/DDBJ databases">
        <authorList>
            <person name="Mural R.J."/>
            <person name="Adams M.D."/>
            <person name="Myers E.W."/>
            <person name="Smith H.O."/>
            <person name="Venter J.C."/>
        </authorList>
    </citation>
    <scope>NUCLEOTIDE SEQUENCE [LARGE SCALE GENOMIC DNA]</scope>
    <source>
        <strain>Brown Norway</strain>
    </source>
</reference>
<keyword id="KW-0025">Alternative splicing</keyword>
<keyword id="KW-0131">Cell cycle</keyword>
<keyword id="KW-0132">Cell division</keyword>
<keyword id="KW-0498">Mitosis</keyword>
<keyword id="KW-1185">Reference proteome</keyword>
<feature type="chain" id="PRO_0000417538" description="Anaphase-promoting complex subunit 15">
    <location>
        <begin position="1"/>
        <end position="132"/>
    </location>
</feature>
<feature type="region of interest" description="Disordered" evidence="2">
    <location>
        <begin position="58"/>
        <end position="132"/>
    </location>
</feature>
<feature type="compositionally biased region" description="Acidic residues" evidence="2">
    <location>
        <begin position="73"/>
        <end position="132"/>
    </location>
</feature>
<feature type="splice variant" id="VSP_043774" description="In isoform 2." evidence="3">
    <original>MEPGLKLSLG</original>
    <variation>MRKLRPREVKCIGQSQTAR</variation>
    <location>
        <begin position="1"/>
        <end position="10"/>
    </location>
</feature>
<protein>
    <recommendedName>
        <fullName>Anaphase-promoting complex subunit 15</fullName>
        <shortName>APC15</shortName>
    </recommendedName>
</protein>
<gene>
    <name type="primary">Anapc15</name>
</gene>
<organism>
    <name type="scientific">Rattus norvegicus</name>
    <name type="common">Rat</name>
    <dbReference type="NCBI Taxonomy" id="10116"/>
    <lineage>
        <taxon>Eukaryota</taxon>
        <taxon>Metazoa</taxon>
        <taxon>Chordata</taxon>
        <taxon>Craniata</taxon>
        <taxon>Vertebrata</taxon>
        <taxon>Euteleostomi</taxon>
        <taxon>Mammalia</taxon>
        <taxon>Eutheria</taxon>
        <taxon>Euarchontoglires</taxon>
        <taxon>Glires</taxon>
        <taxon>Rodentia</taxon>
        <taxon>Myomorpha</taxon>
        <taxon>Muroidea</taxon>
        <taxon>Muridae</taxon>
        <taxon>Murinae</taxon>
        <taxon>Rattus</taxon>
    </lineage>
</organism>
<evidence type="ECO:0000250" key="1">
    <source>
        <dbReference type="UniProtKB" id="P60006"/>
    </source>
</evidence>
<evidence type="ECO:0000256" key="2">
    <source>
        <dbReference type="SAM" id="MobiDB-lite"/>
    </source>
</evidence>
<evidence type="ECO:0000305" key="3"/>
<dbReference type="EMBL" id="CH473956">
    <property type="protein sequence ID" value="EDM18248.1"/>
    <property type="molecule type" value="Genomic_DNA"/>
</dbReference>
<dbReference type="EMBL" id="CH473956">
    <property type="protein sequence ID" value="EDM18249.1"/>
    <property type="molecule type" value="Genomic_DNA"/>
</dbReference>
<dbReference type="EMBL" id="CH473956">
    <property type="protein sequence ID" value="EDM18250.1"/>
    <property type="molecule type" value="Genomic_DNA"/>
</dbReference>
<dbReference type="RefSeq" id="NP_001163906.1">
    <molecule id="D3ZQX4-1"/>
    <property type="nucleotide sequence ID" value="NM_001170435.1"/>
</dbReference>
<dbReference type="RefSeq" id="XP_006229922.1">
    <molecule id="D3ZQX4-1"/>
    <property type="nucleotide sequence ID" value="XM_006229860.4"/>
</dbReference>
<dbReference type="RefSeq" id="XP_006229923.1">
    <molecule id="D3ZQX4-1"/>
    <property type="nucleotide sequence ID" value="XM_006229861.5"/>
</dbReference>
<dbReference type="RefSeq" id="XP_006229924.1">
    <molecule id="D3ZQX4-1"/>
    <property type="nucleotide sequence ID" value="XM_006229862.5"/>
</dbReference>
<dbReference type="RefSeq" id="XP_017444451.1">
    <molecule id="D3ZQX4-1"/>
    <property type="nucleotide sequence ID" value="XM_017588962.3"/>
</dbReference>
<dbReference type="RefSeq" id="XP_038962101.1">
    <molecule id="D3ZQX4-1"/>
    <property type="nucleotide sequence ID" value="XM_039106173.2"/>
</dbReference>
<dbReference type="RefSeq" id="XP_038962104.1">
    <molecule id="D3ZQX4-1"/>
    <property type="nucleotide sequence ID" value="XM_039106176.2"/>
</dbReference>
<dbReference type="RefSeq" id="XP_038962110.1">
    <molecule id="D3ZQX4-1"/>
    <property type="nucleotide sequence ID" value="XM_039106182.2"/>
</dbReference>
<dbReference type="RefSeq" id="XP_038962113.1">
    <molecule id="D3ZQX4-1"/>
    <property type="nucleotide sequence ID" value="XM_039106185.2"/>
</dbReference>
<dbReference type="RefSeq" id="XP_038962124.1">
    <molecule id="D3ZQX4-1"/>
    <property type="nucleotide sequence ID" value="XM_039106196.2"/>
</dbReference>
<dbReference type="SMR" id="D3ZQX4"/>
<dbReference type="FunCoup" id="D3ZQX4">
    <property type="interactions" value="1185"/>
</dbReference>
<dbReference type="STRING" id="10116.ENSRNOP00000027028"/>
<dbReference type="PaxDb" id="10116-ENSRNOP00000027028"/>
<dbReference type="PeptideAtlas" id="D3ZQX4"/>
<dbReference type="Ensembl" id="ENSRNOT00000027028.7">
    <molecule id="D3ZQX4-1"/>
    <property type="protein sequence ID" value="ENSRNOP00000027028.4"/>
    <property type="gene ID" value="ENSRNOG00000019936.8"/>
</dbReference>
<dbReference type="GeneID" id="293155"/>
<dbReference type="KEGG" id="rno:293155"/>
<dbReference type="UCSC" id="RGD:1311634">
    <property type="organism name" value="rat"/>
</dbReference>
<dbReference type="AGR" id="RGD:1311634"/>
<dbReference type="CTD" id="25906"/>
<dbReference type="RGD" id="1311634">
    <property type="gene designation" value="Anapc15"/>
</dbReference>
<dbReference type="eggNOG" id="ENOG502RZUK">
    <property type="taxonomic scope" value="Eukaryota"/>
</dbReference>
<dbReference type="GeneTree" id="ENSGT00390000000938"/>
<dbReference type="HOGENOM" id="CLU_142923_0_0_1"/>
<dbReference type="InParanoid" id="D3ZQX4"/>
<dbReference type="Reactome" id="R-RNO-141430">
    <property type="pathway name" value="Inactivation of APC/C via direct inhibition of the APC/C complex"/>
</dbReference>
<dbReference type="Reactome" id="R-RNO-174048">
    <property type="pathway name" value="APC/C:Cdc20 mediated degradation of Cyclin B"/>
</dbReference>
<dbReference type="Reactome" id="R-RNO-174084">
    <property type="pathway name" value="Autodegradation of Cdh1 by Cdh1:APC/C"/>
</dbReference>
<dbReference type="Reactome" id="R-RNO-174154">
    <property type="pathway name" value="APC/C:Cdc20 mediated degradation of Securin"/>
</dbReference>
<dbReference type="Reactome" id="R-RNO-174178">
    <property type="pathway name" value="APC/C:Cdh1 mediated degradation of Cdc20 and other APC/C:Cdh1 targeted proteins in late mitosis/early G1"/>
</dbReference>
<dbReference type="Reactome" id="R-RNO-174184">
    <property type="pathway name" value="Cdc20:Phospho-APC/C mediated degradation of Cyclin A"/>
</dbReference>
<dbReference type="Reactome" id="R-RNO-176407">
    <property type="pathway name" value="Conversion from APC/C:Cdc20 to APC/C:Cdh1 in late anaphase"/>
</dbReference>
<dbReference type="Reactome" id="R-RNO-176408">
    <property type="pathway name" value="Regulation of APC/C activators between G1/S and early anaphase"/>
</dbReference>
<dbReference type="Reactome" id="R-RNO-176412">
    <property type="pathway name" value="Phosphorylation of the APC/C"/>
</dbReference>
<dbReference type="Reactome" id="R-RNO-179409">
    <property type="pathway name" value="APC-Cdc20 mediated degradation of Nek2A"/>
</dbReference>
<dbReference type="Reactome" id="R-RNO-2467813">
    <property type="pathway name" value="Separation of Sister Chromatids"/>
</dbReference>
<dbReference type="Reactome" id="R-RNO-2559582">
    <property type="pathway name" value="Senescence-Associated Secretory Phenotype (SASP)"/>
</dbReference>
<dbReference type="Reactome" id="R-RNO-68867">
    <property type="pathway name" value="Assembly of the pre-replicative complex"/>
</dbReference>
<dbReference type="Reactome" id="R-RNO-69017">
    <property type="pathway name" value="CDK-mediated phosphorylation and removal of Cdc6"/>
</dbReference>
<dbReference type="UniPathway" id="UPA00143"/>
<dbReference type="PRO" id="PR:D3ZQX4"/>
<dbReference type="Proteomes" id="UP000002494">
    <property type="component" value="Chromosome 1"/>
</dbReference>
<dbReference type="Proteomes" id="UP000234681">
    <property type="component" value="Chromosome 1"/>
</dbReference>
<dbReference type="Bgee" id="ENSRNOG00000019936">
    <property type="expression patterns" value="Expressed in thymus and 19 other cell types or tissues"/>
</dbReference>
<dbReference type="GO" id="GO:0005680">
    <property type="term" value="C:anaphase-promoting complex"/>
    <property type="evidence" value="ECO:0000250"/>
    <property type="project" value="UniProtKB"/>
</dbReference>
<dbReference type="GO" id="GO:0031145">
    <property type="term" value="P:anaphase-promoting complex-dependent catabolic process"/>
    <property type="evidence" value="ECO:0000250"/>
    <property type="project" value="UniProtKB"/>
</dbReference>
<dbReference type="GO" id="GO:0051301">
    <property type="term" value="P:cell division"/>
    <property type="evidence" value="ECO:0007669"/>
    <property type="project" value="UniProtKB-KW"/>
</dbReference>
<dbReference type="GO" id="GO:0141198">
    <property type="term" value="P:protein branched polyubiquitination"/>
    <property type="evidence" value="ECO:0000250"/>
    <property type="project" value="UniProtKB"/>
</dbReference>
<dbReference type="GO" id="GO:0070979">
    <property type="term" value="P:protein K11-linked ubiquitination"/>
    <property type="evidence" value="ECO:0000250"/>
    <property type="project" value="UniProtKB"/>
</dbReference>
<dbReference type="GO" id="GO:0070936">
    <property type="term" value="P:protein K48-linked ubiquitination"/>
    <property type="evidence" value="ECO:0000250"/>
    <property type="project" value="UniProtKB"/>
</dbReference>
<dbReference type="GO" id="GO:0090266">
    <property type="term" value="P:regulation of mitotic cell cycle spindle assembly checkpoint"/>
    <property type="evidence" value="ECO:0000250"/>
    <property type="project" value="UniProtKB"/>
</dbReference>
<dbReference type="InterPro" id="IPR026182">
    <property type="entry name" value="ANAPC15"/>
</dbReference>
<dbReference type="PANTHER" id="PTHR22526">
    <property type="entry name" value="ANAPHASE PROMOTING COMPLEX C SUBUNIT 15, PSEUDOGENE-RELATED"/>
    <property type="match status" value="1"/>
</dbReference>
<dbReference type="PANTHER" id="PTHR22526:SF2">
    <property type="entry name" value="ANAPHASE PROMOTING COMPLEX C SUBUNIT 15, PSEUDOGENE-RELATED"/>
    <property type="match status" value="1"/>
</dbReference>
<dbReference type="Pfam" id="PF15243">
    <property type="entry name" value="ANAPC15"/>
    <property type="match status" value="1"/>
</dbReference>
<sequence length="132" mass="15378">MEPGLKLSLGAMSTLFPSLFPRVTETLWFNLDRPCVEETELQQQEQQHQAWLQSIAEKDNNLVPIGKPASEHYDDEEEEDDEDDEDSEEDSEDDEDMQDMDEMNDYNESPDDGEVNEVDMEGNEQDQDQWMI</sequence>